<dbReference type="EC" id="2.1.1.-" evidence="1"/>
<dbReference type="EC" id="2.1.1.35" evidence="1"/>
<dbReference type="EMBL" id="CP000446">
    <property type="protein sequence ID" value="ABI37259.1"/>
    <property type="molecule type" value="Genomic_DNA"/>
</dbReference>
<dbReference type="RefSeq" id="WP_011621010.1">
    <property type="nucleotide sequence ID" value="NC_008321.1"/>
</dbReference>
<dbReference type="SMR" id="Q0HNV8"/>
<dbReference type="KEGG" id="she:Shewmr4_0178"/>
<dbReference type="HOGENOM" id="CLU_043022_0_0_6"/>
<dbReference type="GO" id="GO:0005829">
    <property type="term" value="C:cytosol"/>
    <property type="evidence" value="ECO:0007669"/>
    <property type="project" value="TreeGrafter"/>
</dbReference>
<dbReference type="GO" id="GO:0019843">
    <property type="term" value="F:rRNA binding"/>
    <property type="evidence" value="ECO:0007669"/>
    <property type="project" value="TreeGrafter"/>
</dbReference>
<dbReference type="GO" id="GO:0030697">
    <property type="term" value="F:tRNA (uracil(54)-C5)-methyltransferase activity, S-adenosyl methionine-dependent"/>
    <property type="evidence" value="ECO:0007669"/>
    <property type="project" value="UniProtKB-UniRule"/>
</dbReference>
<dbReference type="GO" id="GO:0000049">
    <property type="term" value="F:tRNA binding"/>
    <property type="evidence" value="ECO:0007669"/>
    <property type="project" value="TreeGrafter"/>
</dbReference>
<dbReference type="GO" id="GO:0030488">
    <property type="term" value="P:tRNA methylation"/>
    <property type="evidence" value="ECO:0007669"/>
    <property type="project" value="UniProtKB-UniRule"/>
</dbReference>
<dbReference type="CDD" id="cd02440">
    <property type="entry name" value="AdoMet_MTases"/>
    <property type="match status" value="1"/>
</dbReference>
<dbReference type="FunFam" id="2.40.50.1070:FF:000001">
    <property type="entry name" value="tRNA/tmRNA (uracil-C(5))-methyltransferase"/>
    <property type="match status" value="1"/>
</dbReference>
<dbReference type="FunFam" id="3.40.50.150:FF:000012">
    <property type="entry name" value="tRNA/tmRNA (uracil-C(5))-methyltransferase"/>
    <property type="match status" value="1"/>
</dbReference>
<dbReference type="Gene3D" id="2.40.50.1070">
    <property type="match status" value="1"/>
</dbReference>
<dbReference type="Gene3D" id="3.40.50.150">
    <property type="entry name" value="Vaccinia Virus protein VP39"/>
    <property type="match status" value="1"/>
</dbReference>
<dbReference type="HAMAP" id="MF_01011">
    <property type="entry name" value="RNA_methyltr_TrmA"/>
    <property type="match status" value="1"/>
</dbReference>
<dbReference type="InterPro" id="IPR030390">
    <property type="entry name" value="MeTrfase_TrmA_AS"/>
</dbReference>
<dbReference type="InterPro" id="IPR030391">
    <property type="entry name" value="MeTrfase_TrmA_CS"/>
</dbReference>
<dbReference type="InterPro" id="IPR029063">
    <property type="entry name" value="SAM-dependent_MTases_sf"/>
</dbReference>
<dbReference type="InterPro" id="IPR011869">
    <property type="entry name" value="TrmA_MeTrfase"/>
</dbReference>
<dbReference type="InterPro" id="IPR010280">
    <property type="entry name" value="U5_MeTrfase_fam"/>
</dbReference>
<dbReference type="NCBIfam" id="TIGR02143">
    <property type="entry name" value="trmA_only"/>
    <property type="match status" value="1"/>
</dbReference>
<dbReference type="PANTHER" id="PTHR47790">
    <property type="entry name" value="TRNA/TMRNA (URACIL-C(5))-METHYLTRANSFERASE"/>
    <property type="match status" value="1"/>
</dbReference>
<dbReference type="PANTHER" id="PTHR47790:SF2">
    <property type="entry name" value="TRNA_TMRNA (URACIL-C(5))-METHYLTRANSFERASE"/>
    <property type="match status" value="1"/>
</dbReference>
<dbReference type="Pfam" id="PF05958">
    <property type="entry name" value="tRNA_U5-meth_tr"/>
    <property type="match status" value="1"/>
</dbReference>
<dbReference type="SUPFAM" id="SSF53335">
    <property type="entry name" value="S-adenosyl-L-methionine-dependent methyltransferases"/>
    <property type="match status" value="1"/>
</dbReference>
<dbReference type="PROSITE" id="PS51687">
    <property type="entry name" value="SAM_MT_RNA_M5U"/>
    <property type="match status" value="1"/>
</dbReference>
<dbReference type="PROSITE" id="PS01230">
    <property type="entry name" value="TRMA_1"/>
    <property type="match status" value="1"/>
</dbReference>
<dbReference type="PROSITE" id="PS01231">
    <property type="entry name" value="TRMA_2"/>
    <property type="match status" value="1"/>
</dbReference>
<proteinExistence type="inferred from homology"/>
<name>TRMA_SHESM</name>
<accession>Q0HNV8</accession>
<comment type="function">
    <text evidence="1">Dual-specificity methyltransferase that catalyzes the formation of 5-methyluridine at position 54 (m5U54) in all tRNAs, and that of position 341 (m5U341) in tmRNA (transfer-mRNA).</text>
</comment>
<comment type="catalytic activity">
    <reaction evidence="1">
        <text>uridine(54) in tRNA + S-adenosyl-L-methionine = 5-methyluridine(54) in tRNA + S-adenosyl-L-homocysteine + H(+)</text>
        <dbReference type="Rhea" id="RHEA:42712"/>
        <dbReference type="Rhea" id="RHEA-COMP:10167"/>
        <dbReference type="Rhea" id="RHEA-COMP:10193"/>
        <dbReference type="ChEBI" id="CHEBI:15378"/>
        <dbReference type="ChEBI" id="CHEBI:57856"/>
        <dbReference type="ChEBI" id="CHEBI:59789"/>
        <dbReference type="ChEBI" id="CHEBI:65315"/>
        <dbReference type="ChEBI" id="CHEBI:74447"/>
        <dbReference type="EC" id="2.1.1.35"/>
    </reaction>
</comment>
<comment type="catalytic activity">
    <reaction evidence="1">
        <text>uridine(341) in tmRNA + S-adenosyl-L-methionine = 5-methyluridine(341) in tmRNA + S-adenosyl-L-homocysteine + H(+)</text>
        <dbReference type="Rhea" id="RHEA:43612"/>
        <dbReference type="Rhea" id="RHEA-COMP:10630"/>
        <dbReference type="Rhea" id="RHEA-COMP:10631"/>
        <dbReference type="ChEBI" id="CHEBI:15378"/>
        <dbReference type="ChEBI" id="CHEBI:57856"/>
        <dbReference type="ChEBI" id="CHEBI:59789"/>
        <dbReference type="ChEBI" id="CHEBI:65315"/>
        <dbReference type="ChEBI" id="CHEBI:74447"/>
    </reaction>
</comment>
<comment type="similarity">
    <text evidence="1">Belongs to the class I-like SAM-binding methyltransferase superfamily. RNA M5U methyltransferase family. TrmA subfamily.</text>
</comment>
<reference key="1">
    <citation type="submission" date="2006-08" db="EMBL/GenBank/DDBJ databases">
        <title>Complete sequence of Shewanella sp. MR-4.</title>
        <authorList>
            <consortium name="US DOE Joint Genome Institute"/>
            <person name="Copeland A."/>
            <person name="Lucas S."/>
            <person name="Lapidus A."/>
            <person name="Barry K."/>
            <person name="Detter J.C."/>
            <person name="Glavina del Rio T."/>
            <person name="Hammon N."/>
            <person name="Israni S."/>
            <person name="Dalin E."/>
            <person name="Tice H."/>
            <person name="Pitluck S."/>
            <person name="Kiss H."/>
            <person name="Brettin T."/>
            <person name="Bruce D."/>
            <person name="Han C."/>
            <person name="Tapia R."/>
            <person name="Gilna P."/>
            <person name="Schmutz J."/>
            <person name="Larimer F."/>
            <person name="Land M."/>
            <person name="Hauser L."/>
            <person name="Kyrpides N."/>
            <person name="Mikhailova N."/>
            <person name="Nealson K."/>
            <person name="Konstantinidis K."/>
            <person name="Klappenbach J."/>
            <person name="Tiedje J."/>
            <person name="Richardson P."/>
        </authorList>
    </citation>
    <scope>NUCLEOTIDE SEQUENCE [LARGE SCALE GENOMIC DNA]</scope>
    <source>
        <strain>MR-4</strain>
    </source>
</reference>
<gene>
    <name evidence="1" type="primary">trmA</name>
    <name type="ordered locus">Shewmr4_0178</name>
</gene>
<feature type="chain" id="PRO_0000281462" description="tRNA/tmRNA (uracil-C(5))-methyltransferase">
    <location>
        <begin position="1"/>
        <end position="365"/>
    </location>
</feature>
<feature type="active site" description="Nucleophile" evidence="1">
    <location>
        <position position="323"/>
    </location>
</feature>
<feature type="active site" description="Proton acceptor" evidence="1">
    <location>
        <position position="357"/>
    </location>
</feature>
<feature type="binding site" evidence="1">
    <location>
        <position position="189"/>
    </location>
    <ligand>
        <name>S-adenosyl-L-methionine</name>
        <dbReference type="ChEBI" id="CHEBI:59789"/>
    </ligand>
</feature>
<feature type="binding site" evidence="1">
    <location>
        <position position="217"/>
    </location>
    <ligand>
        <name>S-adenosyl-L-methionine</name>
        <dbReference type="ChEBI" id="CHEBI:59789"/>
    </ligand>
</feature>
<feature type="binding site" evidence="1">
    <location>
        <position position="222"/>
    </location>
    <ligand>
        <name>S-adenosyl-L-methionine</name>
        <dbReference type="ChEBI" id="CHEBI:59789"/>
    </ligand>
</feature>
<feature type="binding site" evidence="1">
    <location>
        <position position="238"/>
    </location>
    <ligand>
        <name>S-adenosyl-L-methionine</name>
        <dbReference type="ChEBI" id="CHEBI:59789"/>
    </ligand>
</feature>
<feature type="binding site" evidence="1">
    <location>
        <position position="298"/>
    </location>
    <ligand>
        <name>S-adenosyl-L-methionine</name>
        <dbReference type="ChEBI" id="CHEBI:59789"/>
    </ligand>
</feature>
<keyword id="KW-0489">Methyltransferase</keyword>
<keyword id="KW-0949">S-adenosyl-L-methionine</keyword>
<keyword id="KW-0808">Transferase</keyword>
<keyword id="KW-0819">tRNA processing</keyword>
<organism>
    <name type="scientific">Shewanella sp. (strain MR-4)</name>
    <dbReference type="NCBI Taxonomy" id="60480"/>
    <lineage>
        <taxon>Bacteria</taxon>
        <taxon>Pseudomonadati</taxon>
        <taxon>Pseudomonadota</taxon>
        <taxon>Gammaproteobacteria</taxon>
        <taxon>Alteromonadales</taxon>
        <taxon>Shewanellaceae</taxon>
        <taxon>Shewanella</taxon>
    </lineage>
</organism>
<protein>
    <recommendedName>
        <fullName evidence="1">tRNA/tmRNA (uracil-C(5))-methyltransferase</fullName>
        <ecNumber evidence="1">2.1.1.-</ecNumber>
        <ecNumber evidence="1">2.1.1.35</ecNumber>
    </recommendedName>
    <alternativeName>
        <fullName evidence="1">tRNA (uracil(54)-C(5))-methyltransferase</fullName>
    </alternativeName>
    <alternativeName>
        <fullName evidence="1">tRNA(m5U54)-methyltransferase</fullName>
        <shortName evidence="1">RUMT</shortName>
    </alternativeName>
    <alternativeName>
        <fullName evidence="1">tmRNA (uracil(341)-C(5))-methyltransferase</fullName>
    </alternativeName>
</protein>
<sequence>MNLAAMDPTTYDAQLTAKRIKLEQAFAQFETPSVEVFASEPAHYRMRAEFRIWHEGDDLYYYMFDKVLNDKVRCDQYLPASALINQMMAALIAELKPNHSLRHKLFQVDFLSTLSGEILVSLLYHRQLDDQWRSEAAALKARLSSQFKVNIIGRARKQKIDLDKDFVVESLQVNDKVFHYKQIENSFTQPNAKVAIKMLEWAIDVTQHSQGDLLELYCGNGNFSIALAQNFNRVLATELAKPSVDAAQYNIEVNNIDNLQIIRMSAEEFSDAMAKKRSFRRLEGIDLDSYVCNTIFVDPPRAGIDPATLELVQGYERILYISCNPDTLKDNLQQLNQTHKVTRFALFDQFPYTDHMETGVLLERR</sequence>
<evidence type="ECO:0000255" key="1">
    <source>
        <dbReference type="HAMAP-Rule" id="MF_01011"/>
    </source>
</evidence>